<keyword id="KW-0479">Metal-binding</keyword>
<keyword id="KW-1185">Reference proteome</keyword>
<keyword id="KW-0687">Ribonucleoprotein</keyword>
<keyword id="KW-0689">Ribosomal protein</keyword>
<keyword id="KW-0694">RNA-binding</keyword>
<keyword id="KW-0699">rRNA-binding</keyword>
<keyword id="KW-0862">Zinc</keyword>
<evidence type="ECO:0000255" key="1">
    <source>
        <dbReference type="HAMAP-Rule" id="MF_01364"/>
    </source>
</evidence>
<evidence type="ECO:0000305" key="2"/>
<accession>B2A4F2</accession>
<gene>
    <name evidence="1" type="primary">rpsZ</name>
    <name evidence="1" type="synonym">rpsN</name>
    <name type="ordered locus">Nther_0207</name>
</gene>
<name>RS14Z_NATTJ</name>
<protein>
    <recommendedName>
        <fullName evidence="1">Small ribosomal subunit protein uS14</fullName>
    </recommendedName>
    <alternativeName>
        <fullName evidence="2">30S ribosomal protein S14 type Z</fullName>
    </alternativeName>
</protein>
<dbReference type="EMBL" id="CP001034">
    <property type="protein sequence ID" value="ACB83806.1"/>
    <property type="molecule type" value="Genomic_DNA"/>
</dbReference>
<dbReference type="RefSeq" id="WP_012446695.1">
    <property type="nucleotide sequence ID" value="NC_010718.1"/>
</dbReference>
<dbReference type="SMR" id="B2A4F2"/>
<dbReference type="FunCoup" id="B2A4F2">
    <property type="interactions" value="134"/>
</dbReference>
<dbReference type="STRING" id="457570.Nther_0207"/>
<dbReference type="KEGG" id="nth:Nther_0207"/>
<dbReference type="eggNOG" id="COG0199">
    <property type="taxonomic scope" value="Bacteria"/>
</dbReference>
<dbReference type="HOGENOM" id="CLU_139869_3_0_9"/>
<dbReference type="InParanoid" id="B2A4F2"/>
<dbReference type="OrthoDB" id="9810484at2"/>
<dbReference type="Proteomes" id="UP000001683">
    <property type="component" value="Chromosome"/>
</dbReference>
<dbReference type="GO" id="GO:0005737">
    <property type="term" value="C:cytoplasm"/>
    <property type="evidence" value="ECO:0007669"/>
    <property type="project" value="UniProtKB-ARBA"/>
</dbReference>
<dbReference type="GO" id="GO:0015935">
    <property type="term" value="C:small ribosomal subunit"/>
    <property type="evidence" value="ECO:0007669"/>
    <property type="project" value="TreeGrafter"/>
</dbReference>
<dbReference type="GO" id="GO:0019843">
    <property type="term" value="F:rRNA binding"/>
    <property type="evidence" value="ECO:0007669"/>
    <property type="project" value="UniProtKB-UniRule"/>
</dbReference>
<dbReference type="GO" id="GO:0003735">
    <property type="term" value="F:structural constituent of ribosome"/>
    <property type="evidence" value="ECO:0007669"/>
    <property type="project" value="InterPro"/>
</dbReference>
<dbReference type="GO" id="GO:0008270">
    <property type="term" value="F:zinc ion binding"/>
    <property type="evidence" value="ECO:0007669"/>
    <property type="project" value="UniProtKB-UniRule"/>
</dbReference>
<dbReference type="GO" id="GO:0006412">
    <property type="term" value="P:translation"/>
    <property type="evidence" value="ECO:0007669"/>
    <property type="project" value="UniProtKB-UniRule"/>
</dbReference>
<dbReference type="FunFam" id="4.10.830.10:FF:000001">
    <property type="entry name" value="30S ribosomal protein S14 type Z"/>
    <property type="match status" value="1"/>
</dbReference>
<dbReference type="Gene3D" id="4.10.830.10">
    <property type="entry name" value="30s Ribosomal Protein S14, Chain N"/>
    <property type="match status" value="1"/>
</dbReference>
<dbReference type="HAMAP" id="MF_01364_B">
    <property type="entry name" value="Ribosomal_uS14_2_B"/>
    <property type="match status" value="1"/>
</dbReference>
<dbReference type="InterPro" id="IPR001209">
    <property type="entry name" value="Ribosomal_uS14"/>
</dbReference>
<dbReference type="InterPro" id="IPR023053">
    <property type="entry name" value="Ribosomal_uS14_bact"/>
</dbReference>
<dbReference type="InterPro" id="IPR018271">
    <property type="entry name" value="Ribosomal_uS14_CS"/>
</dbReference>
<dbReference type="InterPro" id="IPR043140">
    <property type="entry name" value="Ribosomal_uS14_sf"/>
</dbReference>
<dbReference type="NCBIfam" id="NF005974">
    <property type="entry name" value="PRK08061.1"/>
    <property type="match status" value="1"/>
</dbReference>
<dbReference type="PANTHER" id="PTHR19836">
    <property type="entry name" value="30S RIBOSOMAL PROTEIN S14"/>
    <property type="match status" value="1"/>
</dbReference>
<dbReference type="PANTHER" id="PTHR19836:SF19">
    <property type="entry name" value="SMALL RIBOSOMAL SUBUNIT PROTEIN US14M"/>
    <property type="match status" value="1"/>
</dbReference>
<dbReference type="Pfam" id="PF00253">
    <property type="entry name" value="Ribosomal_S14"/>
    <property type="match status" value="1"/>
</dbReference>
<dbReference type="SUPFAM" id="SSF57716">
    <property type="entry name" value="Glucocorticoid receptor-like (DNA-binding domain)"/>
    <property type="match status" value="1"/>
</dbReference>
<dbReference type="PROSITE" id="PS00527">
    <property type="entry name" value="RIBOSOMAL_S14"/>
    <property type="match status" value="1"/>
</dbReference>
<comment type="function">
    <text evidence="1">Binds 16S rRNA, required for the assembly of 30S particles and may also be responsible for determining the conformation of the 16S rRNA at the A site.</text>
</comment>
<comment type="cofactor">
    <cofactor evidence="1">
        <name>Zn(2+)</name>
        <dbReference type="ChEBI" id="CHEBI:29105"/>
    </cofactor>
    <text evidence="1">Binds 1 zinc ion per subunit.</text>
</comment>
<comment type="subunit">
    <text evidence="1">Part of the 30S ribosomal subunit. Contacts proteins S3 and S10.</text>
</comment>
<comment type="similarity">
    <text evidence="1">Belongs to the universal ribosomal protein uS14 family. Zinc-binding uS14 subfamily.</text>
</comment>
<sequence>MARKSLIAKAKKRPKFKTRAYNRCKICGRSHAYLRKFGMCRICFRELAHEGKLPGVRKASW</sequence>
<reference key="1">
    <citation type="submission" date="2008-04" db="EMBL/GenBank/DDBJ databases">
        <title>Complete sequence of chromosome of Natranaerobius thermophilus JW/NM-WN-LF.</title>
        <authorList>
            <consortium name="US DOE Joint Genome Institute"/>
            <person name="Copeland A."/>
            <person name="Lucas S."/>
            <person name="Lapidus A."/>
            <person name="Glavina del Rio T."/>
            <person name="Dalin E."/>
            <person name="Tice H."/>
            <person name="Bruce D."/>
            <person name="Goodwin L."/>
            <person name="Pitluck S."/>
            <person name="Chertkov O."/>
            <person name="Brettin T."/>
            <person name="Detter J.C."/>
            <person name="Han C."/>
            <person name="Kuske C.R."/>
            <person name="Schmutz J."/>
            <person name="Larimer F."/>
            <person name="Land M."/>
            <person name="Hauser L."/>
            <person name="Kyrpides N."/>
            <person name="Lykidis A."/>
            <person name="Mesbah N.M."/>
            <person name="Wiegel J."/>
        </authorList>
    </citation>
    <scope>NUCLEOTIDE SEQUENCE [LARGE SCALE GENOMIC DNA]</scope>
    <source>
        <strain>ATCC BAA-1301 / DSM 18059 / JW/NM-WN-LF</strain>
    </source>
</reference>
<proteinExistence type="inferred from homology"/>
<organism>
    <name type="scientific">Natranaerobius thermophilus (strain ATCC BAA-1301 / DSM 18059 / JW/NM-WN-LF)</name>
    <dbReference type="NCBI Taxonomy" id="457570"/>
    <lineage>
        <taxon>Bacteria</taxon>
        <taxon>Bacillati</taxon>
        <taxon>Bacillota</taxon>
        <taxon>Clostridia</taxon>
        <taxon>Natranaerobiales</taxon>
        <taxon>Natranaerobiaceae</taxon>
        <taxon>Natranaerobius</taxon>
    </lineage>
</organism>
<feature type="chain" id="PRO_1000143917" description="Small ribosomal subunit protein uS14">
    <location>
        <begin position="1"/>
        <end position="61"/>
    </location>
</feature>
<feature type="binding site" evidence="1">
    <location>
        <position position="24"/>
    </location>
    <ligand>
        <name>Zn(2+)</name>
        <dbReference type="ChEBI" id="CHEBI:29105"/>
    </ligand>
</feature>
<feature type="binding site" evidence="1">
    <location>
        <position position="27"/>
    </location>
    <ligand>
        <name>Zn(2+)</name>
        <dbReference type="ChEBI" id="CHEBI:29105"/>
    </ligand>
</feature>
<feature type="binding site" evidence="1">
    <location>
        <position position="40"/>
    </location>
    <ligand>
        <name>Zn(2+)</name>
        <dbReference type="ChEBI" id="CHEBI:29105"/>
    </ligand>
</feature>
<feature type="binding site" evidence="1">
    <location>
        <position position="43"/>
    </location>
    <ligand>
        <name>Zn(2+)</name>
        <dbReference type="ChEBI" id="CHEBI:29105"/>
    </ligand>
</feature>